<accession>Q9MS70</accession>
<sequence>MSFENFAIITLKENVFALLPEAYAPFDPIVDDLPIIPVLFLLLAFVWQSAVKFR</sequence>
<geneLocation type="chloroplast"/>
<organism>
    <name type="scientific">Euglena deses</name>
    <dbReference type="NCBI Taxonomy" id="66845"/>
    <lineage>
        <taxon>Eukaryota</taxon>
        <taxon>Discoba</taxon>
        <taxon>Euglenozoa</taxon>
        <taxon>Euglenida</taxon>
        <taxon>Spirocuta</taxon>
        <taxon>Euglenophyceae</taxon>
        <taxon>Euglenales</taxon>
        <taxon>Euglenaceae</taxon>
        <taxon>Euglena</taxon>
    </lineage>
</organism>
<dbReference type="EMBL" id="AF241279">
    <property type="protein sequence ID" value="AAF82448.1"/>
    <property type="molecule type" value="Genomic_DNA"/>
</dbReference>
<dbReference type="SMR" id="Q9MS70"/>
<dbReference type="GO" id="GO:0009535">
    <property type="term" value="C:chloroplast thylakoid membrane"/>
    <property type="evidence" value="ECO:0007669"/>
    <property type="project" value="UniProtKB-SubCell"/>
</dbReference>
<dbReference type="GO" id="GO:0009539">
    <property type="term" value="C:photosystem II reaction center"/>
    <property type="evidence" value="ECO:0007669"/>
    <property type="project" value="InterPro"/>
</dbReference>
<dbReference type="GO" id="GO:0015979">
    <property type="term" value="P:photosynthesis"/>
    <property type="evidence" value="ECO:0007669"/>
    <property type="project" value="UniProtKB-UniRule"/>
</dbReference>
<dbReference type="HAMAP" id="MF_00441">
    <property type="entry name" value="PSII_PsbK"/>
    <property type="match status" value="1"/>
</dbReference>
<dbReference type="InterPro" id="IPR003687">
    <property type="entry name" value="PSII_PsbK"/>
</dbReference>
<dbReference type="InterPro" id="IPR037270">
    <property type="entry name" value="PSII_PsbK_sf"/>
</dbReference>
<dbReference type="NCBIfam" id="NF002715">
    <property type="entry name" value="PRK02553.1"/>
    <property type="match status" value="1"/>
</dbReference>
<dbReference type="PANTHER" id="PTHR35325">
    <property type="match status" value="1"/>
</dbReference>
<dbReference type="PANTHER" id="PTHR35325:SF1">
    <property type="entry name" value="PHOTOSYSTEM II REACTION CENTER PROTEIN K"/>
    <property type="match status" value="1"/>
</dbReference>
<dbReference type="Pfam" id="PF02533">
    <property type="entry name" value="PsbK"/>
    <property type="match status" value="1"/>
</dbReference>
<dbReference type="SUPFAM" id="SSF161037">
    <property type="entry name" value="Photosystem II reaction center protein K, PsbK"/>
    <property type="match status" value="1"/>
</dbReference>
<protein>
    <recommendedName>
        <fullName evidence="1">Photosystem II reaction center protein K</fullName>
        <shortName evidence="1">PSII-K</shortName>
    </recommendedName>
</protein>
<keyword id="KW-0150">Chloroplast</keyword>
<keyword id="KW-0472">Membrane</keyword>
<keyword id="KW-0602">Photosynthesis</keyword>
<keyword id="KW-0604">Photosystem II</keyword>
<keyword id="KW-0934">Plastid</keyword>
<keyword id="KW-0674">Reaction center</keyword>
<keyword id="KW-0793">Thylakoid</keyword>
<keyword id="KW-0812">Transmembrane</keyword>
<keyword id="KW-1133">Transmembrane helix</keyword>
<name>PSBK_EUGDE</name>
<comment type="function">
    <text evidence="1">One of the components of the core complex of photosystem II (PSII). PSII is a light-driven water:plastoquinone oxidoreductase that uses light energy to abstract electrons from H(2)O, generating O(2) and a proton gradient subsequently used for ATP formation. It consists of a core antenna complex that captures photons, and an electron transfer chain that converts photonic excitation into a charge separation.</text>
</comment>
<comment type="subunit">
    <text evidence="2">PSII is composed of 1 copy each of membrane proteins PsbA, PsbB, PsbC, PsbD, PsbE, PsbF, PsbH, PsbI, PsbJ, PsbK, PsbL, PsbM, PsbT, PsbY, PsbZ, Psb30/Ycf12, at least 3 peripheral proteins of the oxygen-evolving complex and a large number of cofactors. It forms dimeric complexes.</text>
</comment>
<comment type="subcellular location">
    <subcellularLocation>
        <location evidence="1">Plastid</location>
        <location evidence="1">Chloroplast thylakoid membrane</location>
        <topology evidence="1">Single-pass membrane protein</topology>
    </subcellularLocation>
</comment>
<comment type="similarity">
    <text evidence="1">Belongs to the PsbK family.</text>
</comment>
<reference key="1">
    <citation type="journal article" date="2001" name="Mol. Gen. Genet.">
        <title>Comparison of psbK operon organization and group III intron content in chloroplast genomes of 12 Euglenoid species.</title>
        <authorList>
            <person name="Doetsch N.A."/>
            <person name="Thompson M.D."/>
            <person name="Favreau M.R."/>
            <person name="Hallick R.B."/>
        </authorList>
    </citation>
    <scope>NUCLEOTIDE SEQUENCE [GENOMIC DNA]</scope>
</reference>
<feature type="propeptide" id="PRO_0000029457" evidence="1">
    <location>
        <begin position="1"/>
        <end position="17"/>
    </location>
</feature>
<feature type="chain" id="PRO_0000029458" description="Photosystem II reaction center protein K" evidence="1">
    <location>
        <begin position="18"/>
        <end position="54"/>
    </location>
</feature>
<feature type="transmembrane region" description="Helical" evidence="1">
    <location>
        <begin position="33"/>
        <end position="53"/>
    </location>
</feature>
<evidence type="ECO:0000255" key="1">
    <source>
        <dbReference type="HAMAP-Rule" id="MF_00441"/>
    </source>
</evidence>
<evidence type="ECO:0000305" key="2"/>
<proteinExistence type="inferred from homology"/>
<gene>
    <name evidence="1" type="primary">psbK</name>
</gene>